<protein>
    <recommendedName>
        <fullName evidence="1">tRNA dimethylallyltransferase</fullName>
        <ecNumber evidence="1">2.5.1.75</ecNumber>
    </recommendedName>
    <alternativeName>
        <fullName evidence="1">Dimethylallyl diphosphate:tRNA dimethylallyltransferase</fullName>
        <shortName evidence="1">DMAPP:tRNA dimethylallyltransferase</shortName>
        <shortName evidence="1">DMATase</shortName>
    </alternativeName>
    <alternativeName>
        <fullName evidence="1">Isopentenyl-diphosphate:tRNA isopentenyltransferase</fullName>
        <shortName evidence="1">IPP transferase</shortName>
        <shortName evidence="1">IPPT</shortName>
        <shortName evidence="1">IPTase</shortName>
    </alternativeName>
</protein>
<keyword id="KW-0067">ATP-binding</keyword>
<keyword id="KW-0460">Magnesium</keyword>
<keyword id="KW-0547">Nucleotide-binding</keyword>
<keyword id="KW-0808">Transferase</keyword>
<keyword id="KW-0819">tRNA processing</keyword>
<gene>
    <name evidence="1" type="primary">miaA</name>
    <name type="ordered locus">SPH_0766</name>
</gene>
<name>MIAA_STRPI</name>
<dbReference type="EC" id="2.5.1.75" evidence="1"/>
<dbReference type="EMBL" id="CP000936">
    <property type="protein sequence ID" value="ACA36399.1"/>
    <property type="molecule type" value="Genomic_DNA"/>
</dbReference>
<dbReference type="RefSeq" id="WP_000850191.1">
    <property type="nucleotide sequence ID" value="NC_010380.1"/>
</dbReference>
<dbReference type="SMR" id="B1IAK9"/>
<dbReference type="KEGG" id="spv:SPH_0766"/>
<dbReference type="HOGENOM" id="CLU_032616_0_1_9"/>
<dbReference type="Proteomes" id="UP000002163">
    <property type="component" value="Chromosome"/>
</dbReference>
<dbReference type="GO" id="GO:0005524">
    <property type="term" value="F:ATP binding"/>
    <property type="evidence" value="ECO:0007669"/>
    <property type="project" value="UniProtKB-UniRule"/>
</dbReference>
<dbReference type="GO" id="GO:0052381">
    <property type="term" value="F:tRNA dimethylallyltransferase activity"/>
    <property type="evidence" value="ECO:0007669"/>
    <property type="project" value="UniProtKB-UniRule"/>
</dbReference>
<dbReference type="GO" id="GO:0006400">
    <property type="term" value="P:tRNA modification"/>
    <property type="evidence" value="ECO:0007669"/>
    <property type="project" value="TreeGrafter"/>
</dbReference>
<dbReference type="Gene3D" id="3.40.50.300">
    <property type="entry name" value="P-loop containing nucleotide triphosphate hydrolases"/>
    <property type="match status" value="1"/>
</dbReference>
<dbReference type="HAMAP" id="MF_00185">
    <property type="entry name" value="IPP_trans"/>
    <property type="match status" value="1"/>
</dbReference>
<dbReference type="InterPro" id="IPR039657">
    <property type="entry name" value="Dimethylallyltransferase"/>
</dbReference>
<dbReference type="InterPro" id="IPR018022">
    <property type="entry name" value="IPT"/>
</dbReference>
<dbReference type="InterPro" id="IPR027417">
    <property type="entry name" value="P-loop_NTPase"/>
</dbReference>
<dbReference type="NCBIfam" id="TIGR00174">
    <property type="entry name" value="miaA"/>
    <property type="match status" value="1"/>
</dbReference>
<dbReference type="PANTHER" id="PTHR11088">
    <property type="entry name" value="TRNA DIMETHYLALLYLTRANSFERASE"/>
    <property type="match status" value="1"/>
</dbReference>
<dbReference type="PANTHER" id="PTHR11088:SF60">
    <property type="entry name" value="TRNA DIMETHYLALLYLTRANSFERASE"/>
    <property type="match status" value="1"/>
</dbReference>
<dbReference type="Pfam" id="PF01715">
    <property type="entry name" value="IPPT"/>
    <property type="match status" value="1"/>
</dbReference>
<dbReference type="SUPFAM" id="SSF52540">
    <property type="entry name" value="P-loop containing nucleoside triphosphate hydrolases"/>
    <property type="match status" value="2"/>
</dbReference>
<proteinExistence type="inferred from homology"/>
<sequence>MKTKIIVIVGPTAVGKTALAIEVAKRFNGEVVSGDSQQVYRGLDIGTAKASPEEQAAVPHHLIDVREITESYSAFDFVSEAKMTIEDIQSRGKLAIIAGGTGLYIQSLLEGYHLGGETPYEEILAYRASLEPYSDEELAHLVEQAGLEIPQFNRRRAMRALEIAHFGQDLENQEILYEPLIICLDDERSQLYERINHRVDLMFEAGLLDEAKWLFDHSPNVQAAKGIGYKELFPYFRGEQTFEEARESLKQATRRFAKRQLTWFRNRMQVTFYQIGESGVQDRILSQIEEFLDD</sequence>
<feature type="chain" id="PRO_1000098693" description="tRNA dimethylallyltransferase">
    <location>
        <begin position="1"/>
        <end position="294"/>
    </location>
</feature>
<feature type="region of interest" description="Interaction with substrate tRNA" evidence="1">
    <location>
        <begin position="35"/>
        <end position="38"/>
    </location>
</feature>
<feature type="binding site" evidence="1">
    <location>
        <begin position="10"/>
        <end position="17"/>
    </location>
    <ligand>
        <name>ATP</name>
        <dbReference type="ChEBI" id="CHEBI:30616"/>
    </ligand>
</feature>
<feature type="binding site" evidence="1">
    <location>
        <begin position="12"/>
        <end position="17"/>
    </location>
    <ligand>
        <name>substrate</name>
    </ligand>
</feature>
<feature type="site" description="Interaction with substrate tRNA" evidence="1">
    <location>
        <position position="101"/>
    </location>
</feature>
<feature type="site" description="Interaction with substrate tRNA" evidence="1">
    <location>
        <position position="127"/>
    </location>
</feature>
<comment type="function">
    <text evidence="1">Catalyzes the transfer of a dimethylallyl group onto the adenine at position 37 in tRNAs that read codons beginning with uridine, leading to the formation of N6-(dimethylallyl)adenosine (i(6)A).</text>
</comment>
<comment type="catalytic activity">
    <reaction evidence="1">
        <text>adenosine(37) in tRNA + dimethylallyl diphosphate = N(6)-dimethylallyladenosine(37) in tRNA + diphosphate</text>
        <dbReference type="Rhea" id="RHEA:26482"/>
        <dbReference type="Rhea" id="RHEA-COMP:10162"/>
        <dbReference type="Rhea" id="RHEA-COMP:10375"/>
        <dbReference type="ChEBI" id="CHEBI:33019"/>
        <dbReference type="ChEBI" id="CHEBI:57623"/>
        <dbReference type="ChEBI" id="CHEBI:74411"/>
        <dbReference type="ChEBI" id="CHEBI:74415"/>
        <dbReference type="EC" id="2.5.1.75"/>
    </reaction>
</comment>
<comment type="cofactor">
    <cofactor evidence="1">
        <name>Mg(2+)</name>
        <dbReference type="ChEBI" id="CHEBI:18420"/>
    </cofactor>
</comment>
<comment type="subunit">
    <text evidence="1">Monomer.</text>
</comment>
<comment type="similarity">
    <text evidence="1">Belongs to the IPP transferase family.</text>
</comment>
<accession>B1IAK9</accession>
<evidence type="ECO:0000255" key="1">
    <source>
        <dbReference type="HAMAP-Rule" id="MF_00185"/>
    </source>
</evidence>
<reference key="1">
    <citation type="journal article" date="2010" name="Genome Biol.">
        <title>Structure and dynamics of the pan-genome of Streptococcus pneumoniae and closely related species.</title>
        <authorList>
            <person name="Donati C."/>
            <person name="Hiller N.L."/>
            <person name="Tettelin H."/>
            <person name="Muzzi A."/>
            <person name="Croucher N.J."/>
            <person name="Angiuoli S.V."/>
            <person name="Oggioni M."/>
            <person name="Dunning Hotopp J.C."/>
            <person name="Hu F.Z."/>
            <person name="Riley D.R."/>
            <person name="Covacci A."/>
            <person name="Mitchell T.J."/>
            <person name="Bentley S.D."/>
            <person name="Kilian M."/>
            <person name="Ehrlich G.D."/>
            <person name="Rappuoli R."/>
            <person name="Moxon E.R."/>
            <person name="Masignani V."/>
        </authorList>
    </citation>
    <scope>NUCLEOTIDE SEQUENCE [LARGE SCALE GENOMIC DNA]</scope>
    <source>
        <strain>Hungary19A-6</strain>
    </source>
</reference>
<organism>
    <name type="scientific">Streptococcus pneumoniae (strain Hungary19A-6)</name>
    <dbReference type="NCBI Taxonomy" id="487214"/>
    <lineage>
        <taxon>Bacteria</taxon>
        <taxon>Bacillati</taxon>
        <taxon>Bacillota</taxon>
        <taxon>Bacilli</taxon>
        <taxon>Lactobacillales</taxon>
        <taxon>Streptococcaceae</taxon>
        <taxon>Streptococcus</taxon>
    </lineage>
</organism>